<protein>
    <recommendedName>
        <fullName>Purple acid phosphatase 13</fullName>
        <ecNumber>3.1.3.2</ecNumber>
    </recommendedName>
</protein>
<gene>
    <name type="primary">PAP13</name>
    <name type="synonym">AT2</name>
    <name type="ordered locus">At2g32770</name>
    <name type="ORF">F24L7.9</name>
</gene>
<reference key="1">
    <citation type="journal article" date="2002" name="J. Biol. Chem.">
        <title>Purple acid phosphatases of Arabidopsis thaliana. Comparative analysis and differential regulation by phosphate deprivation.</title>
        <authorList>
            <person name="Li D."/>
            <person name="Zhu H."/>
            <person name="Liu K."/>
            <person name="Liu X."/>
            <person name="Leggewie G."/>
            <person name="Udvardi M."/>
            <person name="Wang D."/>
        </authorList>
    </citation>
    <scope>NUCLEOTIDE SEQUENCE [MRNA] (ISOFORMS 1 AND 3)</scope>
    <scope>GENE FAMILY</scope>
    <scope>NOMENCLATURE</scope>
    <source>
        <strain>cv. Col-1</strain>
    </source>
</reference>
<reference key="2">
    <citation type="journal article" date="1999" name="Nature">
        <title>Sequence and analysis of chromosome 2 of the plant Arabidopsis thaliana.</title>
        <authorList>
            <person name="Lin X."/>
            <person name="Kaul S."/>
            <person name="Rounsley S.D."/>
            <person name="Shea T.P."/>
            <person name="Benito M.-I."/>
            <person name="Town C.D."/>
            <person name="Fujii C.Y."/>
            <person name="Mason T.M."/>
            <person name="Bowman C.L."/>
            <person name="Barnstead M.E."/>
            <person name="Feldblyum T.V."/>
            <person name="Buell C.R."/>
            <person name="Ketchum K.A."/>
            <person name="Lee J.J."/>
            <person name="Ronning C.M."/>
            <person name="Koo H.L."/>
            <person name="Moffat K.S."/>
            <person name="Cronin L.A."/>
            <person name="Shen M."/>
            <person name="Pai G."/>
            <person name="Van Aken S."/>
            <person name="Umayam L."/>
            <person name="Tallon L.J."/>
            <person name="Gill J.E."/>
            <person name="Adams M.D."/>
            <person name="Carrera A.J."/>
            <person name="Creasy T.H."/>
            <person name="Goodman H.M."/>
            <person name="Somerville C.R."/>
            <person name="Copenhaver G.P."/>
            <person name="Preuss D."/>
            <person name="Nierman W.C."/>
            <person name="White O."/>
            <person name="Eisen J.A."/>
            <person name="Salzberg S.L."/>
            <person name="Fraser C.M."/>
            <person name="Venter J.C."/>
        </authorList>
    </citation>
    <scope>NUCLEOTIDE SEQUENCE [LARGE SCALE GENOMIC DNA]</scope>
    <source>
        <strain>cv. Columbia</strain>
    </source>
</reference>
<reference key="3">
    <citation type="journal article" date="2017" name="Plant J.">
        <title>Araport11: a complete reannotation of the Arabidopsis thaliana reference genome.</title>
        <authorList>
            <person name="Cheng C.Y."/>
            <person name="Krishnakumar V."/>
            <person name="Chan A.P."/>
            <person name="Thibaud-Nissen F."/>
            <person name="Schobel S."/>
            <person name="Town C.D."/>
        </authorList>
    </citation>
    <scope>GENOME REANNOTATION</scope>
    <source>
        <strain>cv. Columbia</strain>
    </source>
</reference>
<reference key="4">
    <citation type="journal article" date="2004" name="Genome Res.">
        <title>Whole genome sequence comparisons and 'full-length' cDNA sequences: a combined approach to evaluate and improve Arabidopsis genome annotation.</title>
        <authorList>
            <person name="Castelli V."/>
            <person name="Aury J.-M."/>
            <person name="Jaillon O."/>
            <person name="Wincker P."/>
            <person name="Clepet C."/>
            <person name="Menard M."/>
            <person name="Cruaud C."/>
            <person name="Quetier F."/>
            <person name="Scarpelli C."/>
            <person name="Schaechter V."/>
            <person name="Temple G."/>
            <person name="Caboche M."/>
            <person name="Weissenbach J."/>
            <person name="Salanoubat M."/>
        </authorList>
    </citation>
    <scope>NUCLEOTIDE SEQUENCE [LARGE SCALE MRNA] (ISOFORM 2)</scope>
    <source>
        <strain>cv. Columbia</strain>
    </source>
</reference>
<reference key="5">
    <citation type="journal article" date="2005" name="Plant Mol. Biol.">
        <title>Expression patterns of purple acid phosphatase genes in Arabidopsis organs and functional analysis of AtPAP23 predominantly transcribed in flower.</title>
        <authorList>
            <person name="Zhu H."/>
            <person name="Qian W."/>
            <person name="Lu X."/>
            <person name="Li D."/>
            <person name="Liu X."/>
            <person name="Liu K."/>
            <person name="Wang D."/>
        </authorList>
    </citation>
    <scope>TISSUE SPECIFICITY</scope>
</reference>
<evidence type="ECO:0000250" key="1"/>
<evidence type="ECO:0000255" key="2"/>
<evidence type="ECO:0000269" key="3">
    <source>
    </source>
</evidence>
<evidence type="ECO:0000303" key="4">
    <source>
    </source>
</evidence>
<evidence type="ECO:0000305" key="5"/>
<name>PPA13_ARATH</name>
<feature type="signal peptide" evidence="2">
    <location>
        <begin position="1"/>
        <end position="25"/>
    </location>
</feature>
<feature type="chain" id="PRO_0000372817" description="Purple acid phosphatase 13">
    <location>
        <begin position="26"/>
        <end position="545"/>
    </location>
</feature>
<feature type="active site" description="Proton donor" evidence="1">
    <location>
        <position position="389"/>
    </location>
</feature>
<feature type="binding site" evidence="1">
    <location>
        <position position="203"/>
    </location>
    <ligand>
        <name>Fe cation</name>
        <dbReference type="ChEBI" id="CHEBI:24875"/>
    </ligand>
</feature>
<feature type="binding site" evidence="1">
    <location>
        <position position="233"/>
    </location>
    <ligand>
        <name>Fe cation</name>
        <dbReference type="ChEBI" id="CHEBI:24875"/>
    </ligand>
</feature>
<feature type="binding site" evidence="1">
    <location>
        <begin position="416"/>
        <end position="418"/>
    </location>
    <ligand>
        <name>substrate</name>
    </ligand>
</feature>
<feature type="binding site" evidence="1">
    <location>
        <position position="416"/>
    </location>
    <ligand>
        <name>Zn(2+)</name>
        <dbReference type="ChEBI" id="CHEBI:29105"/>
    </ligand>
</feature>
<feature type="glycosylation site" description="N-linked (GlcNAc...) asparagine" evidence="2">
    <location>
        <position position="125"/>
    </location>
</feature>
<feature type="glycosylation site" description="N-linked (GlcNAc...) asparagine" evidence="2">
    <location>
        <position position="145"/>
    </location>
</feature>
<feature type="glycosylation site" description="N-linked (GlcNAc...) asparagine" evidence="2">
    <location>
        <position position="209"/>
    </location>
</feature>
<feature type="glycosylation site" description="N-linked (GlcNAc...) asparagine" evidence="2">
    <location>
        <position position="240"/>
    </location>
</feature>
<feature type="glycosylation site" description="N-linked (GlcNAc...) asparagine" evidence="2">
    <location>
        <position position="254"/>
    </location>
</feature>
<feature type="glycosylation site" description="N-linked (GlcNAc...) asparagine" evidence="2">
    <location>
        <position position="306"/>
    </location>
</feature>
<feature type="glycosylation site" description="N-linked (GlcNAc...) asparagine" evidence="2">
    <location>
        <position position="321"/>
    </location>
</feature>
<feature type="glycosylation site" description="N-linked (GlcNAc...) asparagine" evidence="2">
    <location>
        <position position="351"/>
    </location>
</feature>
<feature type="glycosylation site" description="N-linked (GlcNAc...) asparagine" evidence="2">
    <location>
        <position position="367"/>
    </location>
</feature>
<feature type="glycosylation site" description="N-linked (GlcNAc...) asparagine" evidence="2">
    <location>
        <position position="428"/>
    </location>
</feature>
<feature type="glycosylation site" description="N-linked (GlcNAc...) asparagine" evidence="2">
    <location>
        <position position="466"/>
    </location>
</feature>
<feature type="glycosylation site" description="N-linked (GlcNAc...) asparagine" evidence="2">
    <location>
        <position position="475"/>
    </location>
</feature>
<feature type="glycosylation site" description="N-linked (GlcNAc...) asparagine" evidence="2">
    <location>
        <position position="510"/>
    </location>
</feature>
<feature type="splice variant" id="VSP_037193" description="In isoform 3." evidence="4">
    <original>MVVKYTMSMSFFVIFASTVTIIVHGFPSTLDGPLNPVTAPLDPNLNPIAFDLPESDPSFVKPISEFLLPEQISVSLSYSFDSVWISWV</original>
    <variation>MVVVLYT</variation>
    <location>
        <begin position="1"/>
        <end position="88"/>
    </location>
</feature>
<feature type="splice variant" id="VSP_038047" description="In isoform 1." evidence="4">
    <original>GSFSPLYYSFNAGGAHFIVLNSYTLYDNSS</original>
    <variation>A</variation>
    <location>
        <begin position="324"/>
        <end position="353"/>
    </location>
</feature>
<feature type="splice variant" id="VSP_037196" description="In isoform 3." evidence="4">
    <original>K</original>
    <variation>S</variation>
    <location>
        <position position="509"/>
    </location>
</feature>
<feature type="splice variant" id="VSP_037197" description="In isoform 3." evidence="4">
    <location>
        <begin position="510"/>
        <end position="545"/>
    </location>
</feature>
<feature type="sequence conflict" description="In Ref. 4; BX818780." evidence="5" ref="4">
    <original>S</original>
    <variation>R</variation>
    <location>
        <position position="384"/>
    </location>
</feature>
<feature type="sequence conflict" description="In Ref. 4; BX818780." evidence="5" ref="4">
    <original>KG</original>
    <variation>TR</variation>
    <location>
        <begin position="387"/>
        <end position="388"/>
    </location>
</feature>
<feature type="sequence conflict" description="In Ref. 4; BX818780." evidence="5" ref="4">
    <original>E</original>
    <variation>D</variation>
    <location>
        <position position="392"/>
    </location>
</feature>
<feature type="sequence conflict" description="In Ref. 4; BX818780." evidence="5" ref="4">
    <original>D</original>
    <variation>N</variation>
    <location>
        <position position="402"/>
    </location>
</feature>
<feature type="sequence conflict" description="In Ref. 4; AAM16284." evidence="5" ref="4">
    <original>G</original>
    <variation>D</variation>
    <location sequence="O48840-3">
        <position position="47"/>
    </location>
</feature>
<sequence>MVVKYTMSMSFFVIFASTVTIIVHGFPSTLDGPLNPVTAPLDPNLNPIAFDLPESDPSFVKPISEFLLPEQISVSLSYSFDSVWISWVTGEYQIGEKDSAPLDPNCVQSIVQYREFDVRRTRKQNATGHSIVYNQQYSSENGFMNYTSGIIHHVQLTGLKPNTLYRYQCGDPSLSAMSKEYYFRTMPKSTSENYPHRIVVAGDLGLTYNTSTVLGHILSNHPDLVVLLGGFSYADTYLANKTKLDCSSCHCDQNGTSSDCGSCYSSGETYQPRWDYWGRFMEPLTANVPTMMVAGEHEIEPQTENNLTFAAYSSRFAFPSNESGSFSPLYYSFNAGGAHFIVLNSYTLYDNSSDQYIWLESDLIKINRSETPWVVATWSLPWYSTFKGHYREAESMRIHLEDLLYNYRVDIVFNSHVDAYERSNRVYNYTLDQCGPVYITTGAGGAGKLETQHVDDPGNIPDPSQNYSCRSSGLNSTLEPVKDETCPVKQPEYSAYRESSFGFGILEVKNETHALWSWNRNQDLYYLAADVIHIVRQPEMCSVCN</sequence>
<accession>O48840</accession>
<accession>Q3EBP9</accession>
<accession>Q8RX38</accession>
<dbReference type="EC" id="3.1.3.2"/>
<dbReference type="EMBL" id="AF492665">
    <property type="protein sequence ID" value="AAM15914.1"/>
    <property type="molecule type" value="mRNA"/>
</dbReference>
<dbReference type="EMBL" id="AC003974">
    <property type="protein sequence ID" value="AAC04486.1"/>
    <property type="molecule type" value="Genomic_DNA"/>
</dbReference>
<dbReference type="EMBL" id="CP002685">
    <property type="protein sequence ID" value="AEC08736.1"/>
    <property type="molecule type" value="Genomic_DNA"/>
</dbReference>
<dbReference type="EMBL" id="CP002685">
    <property type="protein sequence ID" value="AEC08737.1"/>
    <property type="molecule type" value="Genomic_DNA"/>
</dbReference>
<dbReference type="EMBL" id="CP002685">
    <property type="protein sequence ID" value="AEC08738.1"/>
    <property type="molecule type" value="Genomic_DNA"/>
</dbReference>
<dbReference type="EMBL" id="AY090894">
    <property type="protein sequence ID" value="AAM16284.1"/>
    <property type="molecule type" value="mRNA"/>
</dbReference>
<dbReference type="EMBL" id="BX818780">
    <property type="status" value="NOT_ANNOTATED_CDS"/>
    <property type="molecule type" value="mRNA"/>
</dbReference>
<dbReference type="PIR" id="T00791">
    <property type="entry name" value="T00791"/>
</dbReference>
<dbReference type="RefSeq" id="NP_180836.1">
    <molecule id="O48840-1"/>
    <property type="nucleotide sequence ID" value="NM_128837.1"/>
</dbReference>
<dbReference type="RefSeq" id="NP_850198.1">
    <molecule id="O48840-3"/>
    <property type="nucleotide sequence ID" value="NM_179867.1"/>
</dbReference>
<dbReference type="RefSeq" id="NP_973585.1">
    <molecule id="O48840-2"/>
    <property type="nucleotide sequence ID" value="NM_201856.4"/>
</dbReference>
<dbReference type="SMR" id="O48840"/>
<dbReference type="FunCoup" id="O48840">
    <property type="interactions" value="27"/>
</dbReference>
<dbReference type="GlyCosmos" id="O48840">
    <property type="glycosylation" value="13 sites, No reported glycans"/>
</dbReference>
<dbReference type="GlyGen" id="O48840">
    <property type="glycosylation" value="13 sites"/>
</dbReference>
<dbReference type="PaxDb" id="3702-AT2G32770.3"/>
<dbReference type="ProteomicsDB" id="249013">
    <molecule id="O48840-2"/>
</dbReference>
<dbReference type="EnsemblPlants" id="AT2G32770.1">
    <molecule id="O48840-1"/>
    <property type="protein sequence ID" value="AT2G32770.1"/>
    <property type="gene ID" value="AT2G32770"/>
</dbReference>
<dbReference type="EnsemblPlants" id="AT2G32770.2">
    <molecule id="O48840-3"/>
    <property type="protein sequence ID" value="AT2G32770.2"/>
    <property type="gene ID" value="AT2G32770"/>
</dbReference>
<dbReference type="EnsemblPlants" id="AT2G32770.3">
    <molecule id="O48840-2"/>
    <property type="protein sequence ID" value="AT2G32770.3"/>
    <property type="gene ID" value="AT2G32770"/>
</dbReference>
<dbReference type="GeneID" id="817838"/>
<dbReference type="Gramene" id="AT2G32770.1">
    <molecule id="O48840-1"/>
    <property type="protein sequence ID" value="AT2G32770.1"/>
    <property type="gene ID" value="AT2G32770"/>
</dbReference>
<dbReference type="Gramene" id="AT2G32770.2">
    <molecule id="O48840-3"/>
    <property type="protein sequence ID" value="AT2G32770.2"/>
    <property type="gene ID" value="AT2G32770"/>
</dbReference>
<dbReference type="Gramene" id="AT2G32770.3">
    <molecule id="O48840-2"/>
    <property type="protein sequence ID" value="AT2G32770.3"/>
    <property type="gene ID" value="AT2G32770"/>
</dbReference>
<dbReference type="KEGG" id="ath:AT2G32770"/>
<dbReference type="Araport" id="AT2G32770"/>
<dbReference type="TAIR" id="AT2G32770">
    <property type="gene designation" value="PAP13"/>
</dbReference>
<dbReference type="eggNOG" id="KOG1378">
    <property type="taxonomic scope" value="Eukaryota"/>
</dbReference>
<dbReference type="HOGENOM" id="CLU_013387_1_0_1"/>
<dbReference type="InParanoid" id="O48840"/>
<dbReference type="OMA" id="CCEEDSL"/>
<dbReference type="PhylomeDB" id="O48840"/>
<dbReference type="BioCyc" id="ARA:AT2G32770-MONOMER"/>
<dbReference type="BRENDA" id="3.1.3.2">
    <property type="organism ID" value="399"/>
</dbReference>
<dbReference type="PRO" id="PR:O48840"/>
<dbReference type="Proteomes" id="UP000006548">
    <property type="component" value="Chromosome 2"/>
</dbReference>
<dbReference type="ExpressionAtlas" id="O48840">
    <property type="expression patterns" value="baseline and differential"/>
</dbReference>
<dbReference type="GO" id="GO:0005576">
    <property type="term" value="C:extracellular region"/>
    <property type="evidence" value="ECO:0007669"/>
    <property type="project" value="UniProtKB-SubCell"/>
</dbReference>
<dbReference type="GO" id="GO:0003993">
    <property type="term" value="F:acid phosphatase activity"/>
    <property type="evidence" value="ECO:0000250"/>
    <property type="project" value="TAIR"/>
</dbReference>
<dbReference type="GO" id="GO:0046872">
    <property type="term" value="F:metal ion binding"/>
    <property type="evidence" value="ECO:0007669"/>
    <property type="project" value="UniProtKB-KW"/>
</dbReference>
<dbReference type="CDD" id="cd00839">
    <property type="entry name" value="MPP_PAPs"/>
    <property type="match status" value="1"/>
</dbReference>
<dbReference type="FunFam" id="3.60.21.10:FF:000128">
    <property type="entry name" value="Purple acid phosphatase"/>
    <property type="match status" value="1"/>
</dbReference>
<dbReference type="Gene3D" id="3.60.21.10">
    <property type="match status" value="1"/>
</dbReference>
<dbReference type="Gene3D" id="2.60.40.380">
    <property type="entry name" value="Purple acid phosphatase-like, N-terminal"/>
    <property type="match status" value="1"/>
</dbReference>
<dbReference type="InterPro" id="IPR004843">
    <property type="entry name" value="Calcineurin-like_PHP_ApaH"/>
</dbReference>
<dbReference type="InterPro" id="IPR029052">
    <property type="entry name" value="Metallo-depent_PP-like"/>
</dbReference>
<dbReference type="InterPro" id="IPR041792">
    <property type="entry name" value="MPP_PAP"/>
</dbReference>
<dbReference type="InterPro" id="IPR039331">
    <property type="entry name" value="PPA-like"/>
</dbReference>
<dbReference type="InterPro" id="IPR008963">
    <property type="entry name" value="Purple_acid_Pase-like_N"/>
</dbReference>
<dbReference type="InterPro" id="IPR015914">
    <property type="entry name" value="Purple_acid_Pase_N"/>
</dbReference>
<dbReference type="InterPro" id="IPR025733">
    <property type="entry name" value="Purple_acid_PPase_C_dom"/>
</dbReference>
<dbReference type="PANTHER" id="PTHR22953">
    <property type="entry name" value="ACID PHOSPHATASE RELATED"/>
    <property type="match status" value="1"/>
</dbReference>
<dbReference type="PANTHER" id="PTHR22953:SF15">
    <property type="entry name" value="PURPLE ACID PHOSPHATASE 13"/>
    <property type="match status" value="1"/>
</dbReference>
<dbReference type="Pfam" id="PF00149">
    <property type="entry name" value="Metallophos"/>
    <property type="match status" value="1"/>
</dbReference>
<dbReference type="Pfam" id="PF14008">
    <property type="entry name" value="Metallophos_C"/>
    <property type="match status" value="1"/>
</dbReference>
<dbReference type="Pfam" id="PF16656">
    <property type="entry name" value="Pur_ac_phosph_N"/>
    <property type="match status" value="1"/>
</dbReference>
<dbReference type="SUPFAM" id="SSF56300">
    <property type="entry name" value="Metallo-dependent phosphatases"/>
    <property type="match status" value="1"/>
</dbReference>
<dbReference type="SUPFAM" id="SSF49363">
    <property type="entry name" value="Purple acid phosphatase, N-terminal domain"/>
    <property type="match status" value="1"/>
</dbReference>
<keyword id="KW-0025">Alternative splicing</keyword>
<keyword id="KW-0325">Glycoprotein</keyword>
<keyword id="KW-0378">Hydrolase</keyword>
<keyword id="KW-0408">Iron</keyword>
<keyword id="KW-0479">Metal-binding</keyword>
<keyword id="KW-1185">Reference proteome</keyword>
<keyword id="KW-0964">Secreted</keyword>
<keyword id="KW-0732">Signal</keyword>
<keyword id="KW-0862">Zinc</keyword>
<organism>
    <name type="scientific">Arabidopsis thaliana</name>
    <name type="common">Mouse-ear cress</name>
    <dbReference type="NCBI Taxonomy" id="3702"/>
    <lineage>
        <taxon>Eukaryota</taxon>
        <taxon>Viridiplantae</taxon>
        <taxon>Streptophyta</taxon>
        <taxon>Embryophyta</taxon>
        <taxon>Tracheophyta</taxon>
        <taxon>Spermatophyta</taxon>
        <taxon>Magnoliopsida</taxon>
        <taxon>eudicotyledons</taxon>
        <taxon>Gunneridae</taxon>
        <taxon>Pentapetalae</taxon>
        <taxon>rosids</taxon>
        <taxon>malvids</taxon>
        <taxon>Brassicales</taxon>
        <taxon>Brassicaceae</taxon>
        <taxon>Camelineae</taxon>
        <taxon>Arabidopsis</taxon>
    </lineage>
</organism>
<proteinExistence type="evidence at transcript level"/>
<comment type="catalytic activity">
    <reaction>
        <text>a phosphate monoester + H2O = an alcohol + phosphate</text>
        <dbReference type="Rhea" id="RHEA:15017"/>
        <dbReference type="ChEBI" id="CHEBI:15377"/>
        <dbReference type="ChEBI" id="CHEBI:30879"/>
        <dbReference type="ChEBI" id="CHEBI:43474"/>
        <dbReference type="ChEBI" id="CHEBI:67140"/>
        <dbReference type="EC" id="3.1.3.2"/>
    </reaction>
</comment>
<comment type="cofactor">
    <cofactor evidence="1">
        <name>Fe cation</name>
        <dbReference type="ChEBI" id="CHEBI:24875"/>
    </cofactor>
    <text evidence="1">Binds 1 Fe cation per subunit.</text>
</comment>
<comment type="cofactor">
    <cofactor evidence="1">
        <name>Zn(2+)</name>
        <dbReference type="ChEBI" id="CHEBI:29105"/>
    </cofactor>
    <text evidence="1">Binds 1 zinc ion per subunit.</text>
</comment>
<comment type="subunit">
    <text evidence="1">Homodimer.</text>
</comment>
<comment type="subcellular location">
    <subcellularLocation>
        <location evidence="1">Secreted</location>
    </subcellularLocation>
</comment>
<comment type="alternative products">
    <event type="alternative splicing"/>
    <isoform>
        <id>O48840-2</id>
        <name>2</name>
        <sequence type="displayed"/>
    </isoform>
    <isoform>
        <id>O48840-1</id>
        <name>1</name>
        <sequence type="described" ref="VSP_038047"/>
    </isoform>
    <isoform>
        <id>O48840-3</id>
        <name>3</name>
        <sequence type="described" ref="VSP_037193 VSP_037196 VSP_037197"/>
    </isoform>
</comment>
<comment type="tissue specificity">
    <text evidence="3">Expressed in stems, leaves, flowers and siliques.</text>
</comment>
<comment type="miscellaneous">
    <molecule>Isoform 1</molecule>
    <text evidence="5">May be due to a competing donor splice site.</text>
</comment>
<comment type="miscellaneous">
    <molecule>Isoform 3</molecule>
    <text evidence="5">May be due to introns retention.</text>
</comment>
<comment type="similarity">
    <text evidence="5">Belongs to the metallophosphoesterase superfamily. Purple acid phosphatase family.</text>
</comment>
<comment type="sequence caution" evidence="5">
    <conflict type="frameshift">
        <sequence resource="EMBL" id="BX818780"/>
    </conflict>
</comment>